<accession>P59597</accession>
<sequence>MYHFVSEQTPELRLSAEALVTSRVTQYLKSFQLDAVRFVYDRLAKREFCILNDESGLGKVATVAALLSALPPAKKTLVVLQNDEQLLTGWRFHLDTLTDLQVYIIQGVHDTTDSPHSVYLAKWSQLRSIGDLSRLKFDYIMVDNRGHSLNNSFCTSMLLKQFEGRVNVLISSVDITSDVKLLYNVLRLGDRLEHQYKSFSRFDRKFHLPDPKEVFSKRIDLEEYYKQRGFLSEYIKDFRLRRFRHQFDKTLPLVAPEQYKHNLNLWLASKNSQSTLSGSEVCSTVASIENNPPQQNETVLVEESDRISEHSVDDVVAMSPLIFESSESDDEPITVDPVANENPVLVVSSDDCEIVTPPNTPPNRTPLVNKSPRTKSKKKCSKKPSPCKEADLTDSEKDDEGLTMPPRKSTRAATVHFTPKTRRLNVRLLRVSLDALSTPTPSGATTAIITPKTEPSARRKNRTKQPMDVGRPATRGMQRLTRSAESKINSKYLKHHVLDDAKRNFPRRIKAEGNQTPKTSKRIVKQESKAKAKPEQKKKIKTVDKPAQETPKRKPGRPRKCKTLTETLGKSKTKPNSKPLPPTPQVLSGSSLSSEYMQCAQRIPDDLDAIESPAFRVPFTPQQTPMLLTLPSTHNLLNDSEVVAIPLFKDQVETVVINSSHDESSPQDPSQSRRTKALKRKRKPDAPVNSSFGGGLGLPQAKRSATNKSPDLFSISSDLSQIPLAQPRPSSPFEGFKIFGSEVKQFQQQHAKVTIPAPKKKRDRSCLDILEQMFEPRLQQSSKTSPKVLPTLPLIQKDDATTTFTQRRGTLLEDDFFEITNNGQFGSRMRLNASGEVSPVQQDQQSVRPTQANKITNYLIGSVITQERTQPSNGNRNSIVASLRKSPKSPKHGARTTQATKLTRWFGSVFGGGASQTSSVESVSAPSTPVNPSTSAAACQTRTARSGGATGPTKRKRLELFK</sequence>
<gene>
    <name type="primary">SuUR</name>
</gene>
<comment type="function">
    <text evidence="1">Required for underreplication of DNA, which is found in many late replicating euchromatic regions of salivary gland polytene chromosomes. Controls chromatin organization in polytene chromosomes (By similarity).</text>
</comment>
<comment type="subcellular location">
    <subcellularLocation>
        <location evidence="1">Nucleus</location>
    </subcellularLocation>
    <subcellularLocation>
        <location evidence="1">Chromosome</location>
    </subcellularLocation>
    <text evidence="1">Binds to polytene chromosomes from salivary glands. Localized at late-replicating intercalary heterochromatin and pericentric heterochromatin. Colocalizes with many Polycomb Group proteins binding sites on polytene chromosomes (By similarity).</text>
</comment>
<protein>
    <recommendedName>
        <fullName>Protein suppressor of underreplication</fullName>
    </recommendedName>
</protein>
<feature type="chain" id="PRO_0000072322" description="Protein suppressor of underreplication">
    <location>
        <begin position="1"/>
        <end position="962"/>
    </location>
</feature>
<feature type="region of interest" description="Disordered" evidence="2">
    <location>
        <begin position="353"/>
        <end position="413"/>
    </location>
</feature>
<feature type="region of interest" description="Disordered" evidence="2">
    <location>
        <begin position="438"/>
        <end position="590"/>
    </location>
</feature>
<feature type="region of interest" description="Disordered" evidence="2">
    <location>
        <begin position="658"/>
        <end position="712"/>
    </location>
</feature>
<feature type="region of interest" description="Disordered" evidence="2">
    <location>
        <begin position="866"/>
        <end position="900"/>
    </location>
</feature>
<feature type="region of interest" description="Disordered" evidence="2">
    <location>
        <begin position="916"/>
        <end position="962"/>
    </location>
</feature>
<feature type="compositionally biased region" description="Basic residues" evidence="2">
    <location>
        <begin position="372"/>
        <end position="382"/>
    </location>
</feature>
<feature type="compositionally biased region" description="Basic and acidic residues" evidence="2">
    <location>
        <begin position="386"/>
        <end position="395"/>
    </location>
</feature>
<feature type="compositionally biased region" description="Polar residues" evidence="2">
    <location>
        <begin position="438"/>
        <end position="448"/>
    </location>
</feature>
<feature type="compositionally biased region" description="Polar residues" evidence="2">
    <location>
        <begin position="480"/>
        <end position="489"/>
    </location>
</feature>
<feature type="compositionally biased region" description="Basic and acidic residues" evidence="2">
    <location>
        <begin position="524"/>
        <end position="552"/>
    </location>
</feature>
<feature type="compositionally biased region" description="Basic residues" evidence="2">
    <location>
        <begin position="553"/>
        <end position="562"/>
    </location>
</feature>
<feature type="compositionally biased region" description="Polar residues" evidence="2">
    <location>
        <begin position="564"/>
        <end position="576"/>
    </location>
</feature>
<feature type="compositionally biased region" description="Basic residues" evidence="2">
    <location>
        <begin position="673"/>
        <end position="683"/>
    </location>
</feature>
<feature type="compositionally biased region" description="Polar residues" evidence="2">
    <location>
        <begin position="703"/>
        <end position="712"/>
    </location>
</feature>
<feature type="compositionally biased region" description="Polar residues" evidence="2">
    <location>
        <begin position="866"/>
        <end position="880"/>
    </location>
</feature>
<feature type="compositionally biased region" description="Basic residues" evidence="2">
    <location>
        <begin position="885"/>
        <end position="894"/>
    </location>
</feature>
<feature type="compositionally biased region" description="Polar residues" evidence="2">
    <location>
        <begin position="916"/>
        <end position="944"/>
    </location>
</feature>
<feature type="compositionally biased region" description="Basic residues" evidence="2">
    <location>
        <begin position="953"/>
        <end position="962"/>
    </location>
</feature>
<dbReference type="EMBL" id="AJ539550">
    <property type="protein sequence ID" value="CAD62567.1"/>
    <property type="molecule type" value="Genomic_DNA"/>
</dbReference>
<dbReference type="SMR" id="P59597"/>
<dbReference type="eggNOG" id="ENOG502TBHQ">
    <property type="taxonomic scope" value="Eukaryota"/>
</dbReference>
<dbReference type="OrthoDB" id="6819249at2759"/>
<dbReference type="GO" id="GO:0005725">
    <property type="term" value="C:intercalary heterochromatin"/>
    <property type="evidence" value="ECO:0007669"/>
    <property type="project" value="EnsemblMetazoa"/>
</dbReference>
<dbReference type="GO" id="GO:0043596">
    <property type="term" value="C:nuclear replication fork"/>
    <property type="evidence" value="ECO:0007669"/>
    <property type="project" value="EnsemblMetazoa"/>
</dbReference>
<dbReference type="GO" id="GO:0005721">
    <property type="term" value="C:pericentric heterochromatin"/>
    <property type="evidence" value="ECO:0007669"/>
    <property type="project" value="EnsemblMetazoa"/>
</dbReference>
<dbReference type="GO" id="GO:0005700">
    <property type="term" value="C:polytene chromosome"/>
    <property type="evidence" value="ECO:0007669"/>
    <property type="project" value="EnsemblMetazoa"/>
</dbReference>
<dbReference type="GO" id="GO:0005524">
    <property type="term" value="F:ATP binding"/>
    <property type="evidence" value="ECO:0007669"/>
    <property type="project" value="InterPro"/>
</dbReference>
<dbReference type="GO" id="GO:0003682">
    <property type="term" value="F:chromatin binding"/>
    <property type="evidence" value="ECO:0007669"/>
    <property type="project" value="EnsemblMetazoa"/>
</dbReference>
<dbReference type="GO" id="GO:0015616">
    <property type="term" value="F:DNA translocase activity"/>
    <property type="evidence" value="ECO:0007669"/>
    <property type="project" value="TreeGrafter"/>
</dbReference>
<dbReference type="GO" id="GO:0051276">
    <property type="term" value="P:chromosome organization"/>
    <property type="evidence" value="ECO:0007669"/>
    <property type="project" value="EnsemblMetazoa"/>
</dbReference>
<dbReference type="GO" id="GO:0042023">
    <property type="term" value="P:DNA endoreduplication"/>
    <property type="evidence" value="ECO:0007669"/>
    <property type="project" value="EnsemblMetazoa"/>
</dbReference>
<dbReference type="GO" id="GO:0000724">
    <property type="term" value="P:double-strand break repair via homologous recombination"/>
    <property type="evidence" value="ECO:0007669"/>
    <property type="project" value="TreeGrafter"/>
</dbReference>
<dbReference type="GO" id="GO:0031507">
    <property type="term" value="P:heterochromatin formation"/>
    <property type="evidence" value="ECO:0007669"/>
    <property type="project" value="EnsemblMetazoa"/>
</dbReference>
<dbReference type="GO" id="GO:0045185">
    <property type="term" value="P:maintenance of protein location"/>
    <property type="evidence" value="ECO:0007669"/>
    <property type="project" value="EnsemblMetazoa"/>
</dbReference>
<dbReference type="GO" id="GO:2000104">
    <property type="term" value="P:negative regulation of DNA-templated DNA replication"/>
    <property type="evidence" value="ECO:0007669"/>
    <property type="project" value="EnsemblMetazoa"/>
</dbReference>
<dbReference type="GO" id="GO:0032877">
    <property type="term" value="P:positive regulation of DNA endoreduplication"/>
    <property type="evidence" value="ECO:0007669"/>
    <property type="project" value="EnsemblMetazoa"/>
</dbReference>
<dbReference type="GO" id="GO:0034502">
    <property type="term" value="P:protein localization to chromosome"/>
    <property type="evidence" value="ECO:0007669"/>
    <property type="project" value="EnsemblMetazoa"/>
</dbReference>
<dbReference type="GO" id="GO:0007131">
    <property type="term" value="P:reciprocal meiotic recombination"/>
    <property type="evidence" value="ECO:0007669"/>
    <property type="project" value="TreeGrafter"/>
</dbReference>
<dbReference type="Gene3D" id="3.40.50.10810">
    <property type="entry name" value="Tandem AAA-ATPase domain"/>
    <property type="match status" value="1"/>
</dbReference>
<dbReference type="InterPro" id="IPR027417">
    <property type="entry name" value="P-loop_NTPase"/>
</dbReference>
<dbReference type="InterPro" id="IPR038718">
    <property type="entry name" value="SNF2-like_sf"/>
</dbReference>
<dbReference type="InterPro" id="IPR000330">
    <property type="entry name" value="SNF2_N"/>
</dbReference>
<dbReference type="InterPro" id="IPR050496">
    <property type="entry name" value="SNF2_RAD54_helicase_repair"/>
</dbReference>
<dbReference type="PANTHER" id="PTHR45629:SF7">
    <property type="entry name" value="DNA EXCISION REPAIR PROTEIN ERCC-6-RELATED"/>
    <property type="match status" value="1"/>
</dbReference>
<dbReference type="PANTHER" id="PTHR45629">
    <property type="entry name" value="SNF2/RAD54 FAMILY MEMBER"/>
    <property type="match status" value="1"/>
</dbReference>
<dbReference type="Pfam" id="PF00176">
    <property type="entry name" value="SNF2-rel_dom"/>
    <property type="match status" value="1"/>
</dbReference>
<dbReference type="SUPFAM" id="SSF52540">
    <property type="entry name" value="P-loop containing nucleoside triphosphate hydrolases"/>
    <property type="match status" value="1"/>
</dbReference>
<proteinExistence type="inferred from homology"/>
<reference key="1">
    <citation type="submission" date="2003-02" db="EMBL/GenBank/DDBJ databases">
        <title>Cloning of Drosophila erecta SuUR gene.</title>
        <authorList>
            <person name="Yurlova A.A."/>
            <person name="Belyakin S.N."/>
            <person name="Makunin I.V."/>
            <person name="Zhimulev I.F."/>
        </authorList>
    </citation>
    <scope>NUCLEOTIDE SEQUENCE [GENOMIC DNA]</scope>
    <source>
        <tissue>Ovary</tissue>
    </source>
</reference>
<evidence type="ECO:0000250" key="1"/>
<evidence type="ECO:0000256" key="2">
    <source>
        <dbReference type="SAM" id="MobiDB-lite"/>
    </source>
</evidence>
<organism>
    <name type="scientific">Drosophila erecta</name>
    <name type="common">Fruit fly</name>
    <dbReference type="NCBI Taxonomy" id="7220"/>
    <lineage>
        <taxon>Eukaryota</taxon>
        <taxon>Metazoa</taxon>
        <taxon>Ecdysozoa</taxon>
        <taxon>Arthropoda</taxon>
        <taxon>Hexapoda</taxon>
        <taxon>Insecta</taxon>
        <taxon>Pterygota</taxon>
        <taxon>Neoptera</taxon>
        <taxon>Endopterygota</taxon>
        <taxon>Diptera</taxon>
        <taxon>Brachycera</taxon>
        <taxon>Muscomorpha</taxon>
        <taxon>Ephydroidea</taxon>
        <taxon>Drosophilidae</taxon>
        <taxon>Drosophila</taxon>
        <taxon>Sophophora</taxon>
    </lineage>
</organism>
<name>SUUR_DROER</name>
<keyword id="KW-0156">Chromatin regulator</keyword>
<keyword id="KW-0158">Chromosome</keyword>
<keyword id="KW-0217">Developmental protein</keyword>
<keyword id="KW-0539">Nucleus</keyword>